<keyword id="KW-0002">3D-structure</keyword>
<keyword id="KW-0256">Endoplasmic reticulum</keyword>
<keyword id="KW-0931">ER-Golgi transport</keyword>
<keyword id="KW-0333">Golgi apparatus</keyword>
<keyword id="KW-1185">Reference proteome</keyword>
<keyword id="KW-0813">Transport</keyword>
<dbReference type="EMBL" id="AL645527">
    <property type="status" value="NOT_ANNOTATED_CDS"/>
    <property type="molecule type" value="Genomic_DNA"/>
</dbReference>
<dbReference type="CCDS" id="CCDS24889.1"/>
<dbReference type="RefSeq" id="NP_001019377.1">
    <property type="nucleotide sequence ID" value="NM_001024206.3"/>
</dbReference>
<dbReference type="RefSeq" id="NP_001423117.1">
    <property type="nucleotide sequence ID" value="NM_001436188.1"/>
</dbReference>
<dbReference type="RefSeq" id="NP_001423120.1">
    <property type="nucleotide sequence ID" value="NM_001436191.1"/>
</dbReference>
<dbReference type="PDB" id="2J3T">
    <property type="method" value="X-ray"/>
    <property type="resolution" value="2.40 A"/>
    <property type="chains" value="C=1-145"/>
</dbReference>
<dbReference type="PDBsum" id="2J3T"/>
<dbReference type="SMR" id="Q5NCF2"/>
<dbReference type="BioGRID" id="232834">
    <property type="interactions" value="8"/>
</dbReference>
<dbReference type="ComplexPortal" id="CPX-4764">
    <property type="entry name" value="TRAPP II complex"/>
</dbReference>
<dbReference type="ComplexPortal" id="CPX-4766">
    <property type="entry name" value="TRAPP III complex"/>
</dbReference>
<dbReference type="FunCoup" id="Q5NCF2">
    <property type="interactions" value="1923"/>
</dbReference>
<dbReference type="IntAct" id="Q5NCF2">
    <property type="interactions" value="1"/>
</dbReference>
<dbReference type="STRING" id="10090.ENSMUSP00000099661"/>
<dbReference type="iPTMnet" id="Q5NCF2"/>
<dbReference type="PhosphoSitePlus" id="Q5NCF2"/>
<dbReference type="PaxDb" id="10090-ENSMUSP00000099662"/>
<dbReference type="ProteomicsDB" id="260730"/>
<dbReference type="Pumba" id="Q5NCF2"/>
<dbReference type="Antibodypedia" id="24467">
    <property type="antibodies" value="72 antibodies from 22 providers"/>
</dbReference>
<dbReference type="Ensembl" id="ENSMUST00000102601.10">
    <property type="protein sequence ID" value="ENSMUSP00000099661.4"/>
    <property type="gene ID" value="ENSMUSG00000049299.15"/>
</dbReference>
<dbReference type="Ensembl" id="ENSMUST00000102602.8">
    <property type="protein sequence ID" value="ENSMUSP00000099662.2"/>
    <property type="gene ID" value="ENSMUSG00000049299.15"/>
</dbReference>
<dbReference type="GeneID" id="245828"/>
<dbReference type="KEGG" id="mmu:245828"/>
<dbReference type="UCSC" id="uc007jpq.2">
    <property type="organism name" value="mouse"/>
</dbReference>
<dbReference type="AGR" id="MGI:1098727"/>
<dbReference type="CTD" id="58485"/>
<dbReference type="MGI" id="MGI:1098727">
    <property type="gene designation" value="Trappc1"/>
</dbReference>
<dbReference type="VEuPathDB" id="HostDB:ENSMUSG00000049299"/>
<dbReference type="eggNOG" id="KOG3368">
    <property type="taxonomic scope" value="Eukaryota"/>
</dbReference>
<dbReference type="GeneTree" id="ENSGT00940000153761"/>
<dbReference type="HOGENOM" id="CLU_053380_4_1_1"/>
<dbReference type="InParanoid" id="Q5NCF2"/>
<dbReference type="OMA" id="GKLMYGM"/>
<dbReference type="OrthoDB" id="2259at9989"/>
<dbReference type="TreeFam" id="TF323681"/>
<dbReference type="Reactome" id="R-MMU-204005">
    <property type="pathway name" value="COPII-mediated vesicle transport"/>
</dbReference>
<dbReference type="Reactome" id="R-MMU-6798695">
    <property type="pathway name" value="Neutrophil degranulation"/>
</dbReference>
<dbReference type="Reactome" id="R-MMU-8876198">
    <property type="pathway name" value="RAB GEFs exchange GTP for GDP on RABs"/>
</dbReference>
<dbReference type="BioGRID-ORCS" id="245828">
    <property type="hits" value="25 hits in 79 CRISPR screens"/>
</dbReference>
<dbReference type="ChiTaRS" id="Trappc1">
    <property type="organism name" value="mouse"/>
</dbReference>
<dbReference type="EvolutionaryTrace" id="Q5NCF2"/>
<dbReference type="PRO" id="PR:Q5NCF2"/>
<dbReference type="Proteomes" id="UP000000589">
    <property type="component" value="Chromosome 11"/>
</dbReference>
<dbReference type="RNAct" id="Q5NCF2">
    <property type="molecule type" value="protein"/>
</dbReference>
<dbReference type="Bgee" id="ENSMUSG00000049299">
    <property type="expression patterns" value="Expressed in saccule of membranous labyrinth and 270 other cell types or tissues"/>
</dbReference>
<dbReference type="ExpressionAtlas" id="Q5NCF2">
    <property type="expression patterns" value="baseline and differential"/>
</dbReference>
<dbReference type="GO" id="GO:0005737">
    <property type="term" value="C:cytoplasm"/>
    <property type="evidence" value="ECO:0000303"/>
    <property type="project" value="ComplexPortal"/>
</dbReference>
<dbReference type="GO" id="GO:0005783">
    <property type="term" value="C:endoplasmic reticulum"/>
    <property type="evidence" value="ECO:0007669"/>
    <property type="project" value="UniProtKB-SubCell"/>
</dbReference>
<dbReference type="GO" id="GO:0030008">
    <property type="term" value="C:TRAPP complex"/>
    <property type="evidence" value="ECO:0000314"/>
    <property type="project" value="MGI"/>
</dbReference>
<dbReference type="GO" id="GO:1990071">
    <property type="term" value="C:TRAPPII protein complex"/>
    <property type="evidence" value="ECO:0000303"/>
    <property type="project" value="ComplexPortal"/>
</dbReference>
<dbReference type="GO" id="GO:1990072">
    <property type="term" value="C:TRAPPIII protein complex"/>
    <property type="evidence" value="ECO:0000303"/>
    <property type="project" value="ComplexPortal"/>
</dbReference>
<dbReference type="GO" id="GO:0048208">
    <property type="term" value="P:COPII vesicle coating"/>
    <property type="evidence" value="ECO:0000303"/>
    <property type="project" value="ComplexPortal"/>
</dbReference>
<dbReference type="GO" id="GO:0006888">
    <property type="term" value="P:endoplasmic reticulum to Golgi vesicle-mediated transport"/>
    <property type="evidence" value="ECO:0000303"/>
    <property type="project" value="ComplexPortal"/>
</dbReference>
<dbReference type="GO" id="GO:0006901">
    <property type="term" value="P:vesicle coating"/>
    <property type="evidence" value="ECO:0000303"/>
    <property type="project" value="ComplexPortal"/>
</dbReference>
<dbReference type="GO" id="GO:0099022">
    <property type="term" value="P:vesicle tethering"/>
    <property type="evidence" value="ECO:0000303"/>
    <property type="project" value="ComplexPortal"/>
</dbReference>
<dbReference type="CDD" id="cd14855">
    <property type="entry name" value="TRAPPC1_MUM2"/>
    <property type="match status" value="1"/>
</dbReference>
<dbReference type="FunFam" id="3.30.450.70:FF:000004">
    <property type="entry name" value="Trafficking protein particle complex 1"/>
    <property type="match status" value="1"/>
</dbReference>
<dbReference type="Gene3D" id="3.30.450.70">
    <property type="match status" value="1"/>
</dbReference>
<dbReference type="InterPro" id="IPR011012">
    <property type="entry name" value="Longin-like_dom_sf"/>
</dbReference>
<dbReference type="InterPro" id="IPR007233">
    <property type="entry name" value="TRAPPC"/>
</dbReference>
<dbReference type="PANTHER" id="PTHR23249">
    <property type="entry name" value="TRAFFICKING PROTEIN PARTICLE COMPLEX SUBUNIT"/>
    <property type="match status" value="1"/>
</dbReference>
<dbReference type="PANTHER" id="PTHR23249:SF16">
    <property type="entry name" value="TRAFFICKING PROTEIN PARTICLE COMPLEX SUBUNIT 1"/>
    <property type="match status" value="1"/>
</dbReference>
<dbReference type="Pfam" id="PF04099">
    <property type="entry name" value="Sybindin"/>
    <property type="match status" value="1"/>
</dbReference>
<dbReference type="SMART" id="SM01399">
    <property type="entry name" value="Sybindin"/>
    <property type="match status" value="1"/>
</dbReference>
<dbReference type="SUPFAM" id="SSF64356">
    <property type="entry name" value="SNARE-like"/>
    <property type="match status" value="1"/>
</dbReference>
<feature type="chain" id="PRO_0000211563" description="Trafficking protein particle complex subunit 1">
    <location>
        <begin position="1"/>
        <end position="145"/>
    </location>
</feature>
<feature type="strand" evidence="5">
    <location>
        <begin position="3"/>
        <end position="9"/>
    </location>
</feature>
<feature type="strand" evidence="5">
    <location>
        <begin position="15"/>
        <end position="22"/>
    </location>
</feature>
<feature type="helix" evidence="5">
    <location>
        <begin position="31"/>
        <end position="52"/>
    </location>
</feature>
<feature type="strand" evidence="5">
    <location>
        <begin position="61"/>
        <end position="65"/>
    </location>
</feature>
<feature type="strand" evidence="5">
    <location>
        <begin position="70"/>
        <end position="75"/>
    </location>
</feature>
<feature type="strand" evidence="5">
    <location>
        <begin position="81"/>
        <end position="86"/>
    </location>
</feature>
<feature type="helix" evidence="5">
    <location>
        <begin position="94"/>
        <end position="102"/>
    </location>
</feature>
<feature type="helix" evidence="5">
    <location>
        <begin position="105"/>
        <end position="108"/>
    </location>
</feature>
<feature type="turn" evidence="5">
    <location>
        <begin position="109"/>
        <end position="111"/>
    </location>
</feature>
<feature type="helix" evidence="5">
    <location>
        <begin position="124"/>
        <end position="134"/>
    </location>
</feature>
<accession>Q5NCF2</accession>
<sequence>MTVHNLYLFDRNGVCLHYSEWHRKKQAGIPKEEEYKLMYGMLFSIRSFVSKMSPLDMKDGFLSFQTSRYKLHYYETPTGIKVVMNTDLGVGPIRDVLHHIYSALYVEFVVKNPLCPLGQTVQSELFRSRLDSYVRSLPFFSARAG</sequence>
<comment type="function">
    <text evidence="1">May play a role in vesicular transport from endoplasmic reticulum to Golgi.</text>
</comment>
<comment type="subunit">
    <text evidence="2">Part of the multisubunit transport protein particle (TRAPP) complex. The heterodimer TRAPPC6B-TRAPPC3 interacts with TRAPPC1 likely providing a core for TRAPP complex formation.</text>
</comment>
<comment type="subcellular location">
    <subcellularLocation>
        <location evidence="1">Golgi apparatus</location>
        <location evidence="1">cis-Golgi network</location>
    </subcellularLocation>
    <subcellularLocation>
        <location evidence="1">Endoplasmic reticulum</location>
    </subcellularLocation>
</comment>
<comment type="similarity">
    <text evidence="3">Belongs to the TRAPP small subunits family. BET5 subfamily.</text>
</comment>
<gene>
    <name evidence="4" type="primary">Trappc1</name>
</gene>
<proteinExistence type="evidence at protein level"/>
<evidence type="ECO:0000250" key="1"/>
<evidence type="ECO:0000250" key="2">
    <source>
        <dbReference type="UniProtKB" id="Q9Y5R8"/>
    </source>
</evidence>
<evidence type="ECO:0000305" key="3"/>
<evidence type="ECO:0000312" key="4">
    <source>
        <dbReference type="MGI" id="MGI:1098727"/>
    </source>
</evidence>
<evidence type="ECO:0007829" key="5">
    <source>
        <dbReference type="PDB" id="2J3T"/>
    </source>
</evidence>
<protein>
    <recommendedName>
        <fullName>Trafficking protein particle complex subunit 1</fullName>
    </recommendedName>
</protein>
<name>TPPC1_MOUSE</name>
<reference key="1">
    <citation type="journal article" date="2009" name="PLoS Biol.">
        <title>Lineage-specific biology revealed by a finished genome assembly of the mouse.</title>
        <authorList>
            <person name="Church D.M."/>
            <person name="Goodstadt L."/>
            <person name="Hillier L.W."/>
            <person name="Zody M.C."/>
            <person name="Goldstein S."/>
            <person name="She X."/>
            <person name="Bult C.J."/>
            <person name="Agarwala R."/>
            <person name="Cherry J.L."/>
            <person name="DiCuccio M."/>
            <person name="Hlavina W."/>
            <person name="Kapustin Y."/>
            <person name="Meric P."/>
            <person name="Maglott D."/>
            <person name="Birtle Z."/>
            <person name="Marques A.C."/>
            <person name="Graves T."/>
            <person name="Zhou S."/>
            <person name="Teague B."/>
            <person name="Potamousis K."/>
            <person name="Churas C."/>
            <person name="Place M."/>
            <person name="Herschleb J."/>
            <person name="Runnheim R."/>
            <person name="Forrest D."/>
            <person name="Amos-Landgraf J."/>
            <person name="Schwartz D.C."/>
            <person name="Cheng Z."/>
            <person name="Lindblad-Toh K."/>
            <person name="Eichler E.E."/>
            <person name="Ponting C.P."/>
        </authorList>
    </citation>
    <scope>NUCLEOTIDE SEQUENCE [LARGE SCALE GENOMIC DNA]</scope>
    <source>
        <strain>C57BL/6J</strain>
    </source>
</reference>
<reference key="2">
    <citation type="journal article" date="2010" name="Cell">
        <title>A tissue-specific atlas of mouse protein phosphorylation and expression.</title>
        <authorList>
            <person name="Huttlin E.L."/>
            <person name="Jedrychowski M.P."/>
            <person name="Elias J.E."/>
            <person name="Goswami T."/>
            <person name="Rad R."/>
            <person name="Beausoleil S.A."/>
            <person name="Villen J."/>
            <person name="Haas W."/>
            <person name="Sowa M.E."/>
            <person name="Gygi S.P."/>
        </authorList>
    </citation>
    <scope>IDENTIFICATION BY MASS SPECTROMETRY [LARGE SCALE ANALYSIS]</scope>
    <source>
        <tissue>Brain</tissue>
        <tissue>Brown adipose tissue</tissue>
        <tissue>Kidney</tissue>
        <tissue>Liver</tissue>
        <tissue>Lung</tissue>
        <tissue>Pancreas</tissue>
        <tissue>Spleen</tissue>
        <tissue>Testis</tissue>
    </source>
</reference>
<organism>
    <name type="scientific">Mus musculus</name>
    <name type="common">Mouse</name>
    <dbReference type="NCBI Taxonomy" id="10090"/>
    <lineage>
        <taxon>Eukaryota</taxon>
        <taxon>Metazoa</taxon>
        <taxon>Chordata</taxon>
        <taxon>Craniata</taxon>
        <taxon>Vertebrata</taxon>
        <taxon>Euteleostomi</taxon>
        <taxon>Mammalia</taxon>
        <taxon>Eutheria</taxon>
        <taxon>Euarchontoglires</taxon>
        <taxon>Glires</taxon>
        <taxon>Rodentia</taxon>
        <taxon>Myomorpha</taxon>
        <taxon>Muroidea</taxon>
        <taxon>Muridae</taxon>
        <taxon>Murinae</taxon>
        <taxon>Mus</taxon>
        <taxon>Mus</taxon>
    </lineage>
</organism>